<gene>
    <name type="primary">RNASE1</name>
    <name type="synonym">RNS1</name>
</gene>
<proteinExistence type="evidence at protein level"/>
<sequence length="124" mass="14025">KETAAEKFQRQHMDTSSSLSNDSNYCNQMMVRRNMTQDRCKPVNTFVHESEADVKAVCSQKNVTCKNGQTNCYQSNSTMHITDCRETGSSKYPNCAYKTSQLQKHIIVACEGDPYVPVHYDASV</sequence>
<name>RNAS1_HIPAM</name>
<feature type="chain" id="PRO_0000057199" description="Ribonuclease pancreatic">
    <location>
        <begin position="1"/>
        <end position="124"/>
    </location>
</feature>
<feature type="region of interest" description="Disordered" evidence="2">
    <location>
        <begin position="1"/>
        <end position="21"/>
    </location>
</feature>
<feature type="compositionally biased region" description="Basic and acidic residues" evidence="2">
    <location>
        <begin position="1"/>
        <end position="13"/>
    </location>
</feature>
<feature type="active site" description="Proton acceptor" evidence="1">
    <location>
        <position position="12"/>
    </location>
</feature>
<feature type="active site" description="Proton donor" evidence="1">
    <location>
        <position position="119"/>
    </location>
</feature>
<feature type="binding site" evidence="1">
    <location>
        <position position="7"/>
    </location>
    <ligand>
        <name>substrate</name>
    </ligand>
</feature>
<feature type="binding site" evidence="1">
    <location>
        <position position="10"/>
    </location>
    <ligand>
        <name>substrate</name>
    </ligand>
</feature>
<feature type="binding site" evidence="1">
    <location>
        <begin position="41"/>
        <end position="45"/>
    </location>
    <ligand>
        <name>substrate</name>
    </ligand>
</feature>
<feature type="binding site" evidence="1">
    <location>
        <position position="66"/>
    </location>
    <ligand>
        <name>substrate</name>
    </ligand>
</feature>
<feature type="binding site" evidence="1">
    <location>
        <position position="85"/>
    </location>
    <ligand>
        <name>substrate</name>
    </ligand>
</feature>
<feature type="glycosylation site" description="N-linked (GlcNAc...) asparagine" evidence="3">
    <location>
        <position position="34"/>
    </location>
</feature>
<feature type="disulfide bond" evidence="1">
    <location>
        <begin position="26"/>
        <end position="84"/>
    </location>
</feature>
<feature type="disulfide bond" evidence="1">
    <location>
        <begin position="40"/>
        <end position="95"/>
    </location>
</feature>
<feature type="disulfide bond" evidence="1">
    <location>
        <begin position="58"/>
        <end position="110"/>
    </location>
</feature>
<feature type="disulfide bond" evidence="1">
    <location>
        <begin position="65"/>
        <end position="72"/>
    </location>
</feature>
<feature type="sequence variant" description="In 50%, this form is not glycosylated." evidence="3">
    <original>Q</original>
    <variation>K</variation>
    <location>
        <position position="37"/>
    </location>
</feature>
<evidence type="ECO:0000250" key="1"/>
<evidence type="ECO:0000256" key="2">
    <source>
        <dbReference type="SAM" id="MobiDB-lite"/>
    </source>
</evidence>
<evidence type="ECO:0000269" key="3">
    <source>
    </source>
</evidence>
<evidence type="ECO:0000305" key="4"/>
<comment type="function">
    <text evidence="1">Endonuclease that catalyzes the cleavage of RNA on the 3' side of pyrimidine nucleotides. Acts on single-stranded and double-stranded RNA (By similarity).</text>
</comment>
<comment type="catalytic activity">
    <reaction>
        <text>an [RNA] containing cytidine + H2O = an [RNA]-3'-cytidine-3'-phosphate + a 5'-hydroxy-ribonucleotide-3'-[RNA].</text>
        <dbReference type="EC" id="4.6.1.18"/>
    </reaction>
</comment>
<comment type="catalytic activity">
    <reaction>
        <text>an [RNA] containing uridine + H2O = an [RNA]-3'-uridine-3'-phosphate + a 5'-hydroxy-ribonucleotide-3'-[RNA].</text>
        <dbReference type="EC" id="4.6.1.18"/>
    </reaction>
</comment>
<comment type="subunit">
    <text evidence="1">Monomer. Interacts with and forms tight 1:1 complexes with RNH1. Dimerization of two such complexes may occur. Interaction with RNH1 inhibits this protein (By similarity).</text>
</comment>
<comment type="subcellular location">
    <subcellularLocation>
        <location>Secreted</location>
    </subcellularLocation>
</comment>
<comment type="tissue specificity">
    <text>Pancreas.</text>
</comment>
<comment type="similarity">
    <text evidence="4">Belongs to the pancreatic ribonuclease family.</text>
</comment>
<dbReference type="EC" id="4.6.1.18"/>
<dbReference type="PIR" id="A00817">
    <property type="entry name" value="NRHP"/>
</dbReference>
<dbReference type="SMR" id="P00672"/>
<dbReference type="GlyCosmos" id="P00672">
    <property type="glycosylation" value="1 site, No reported glycans"/>
</dbReference>
<dbReference type="iPTMnet" id="P00672"/>
<dbReference type="GO" id="GO:0005576">
    <property type="term" value="C:extracellular region"/>
    <property type="evidence" value="ECO:0007669"/>
    <property type="project" value="UniProtKB-SubCell"/>
</dbReference>
<dbReference type="GO" id="GO:0016829">
    <property type="term" value="F:lyase activity"/>
    <property type="evidence" value="ECO:0007669"/>
    <property type="project" value="UniProtKB-KW"/>
</dbReference>
<dbReference type="GO" id="GO:0003676">
    <property type="term" value="F:nucleic acid binding"/>
    <property type="evidence" value="ECO:0007669"/>
    <property type="project" value="InterPro"/>
</dbReference>
<dbReference type="GO" id="GO:0004522">
    <property type="term" value="F:ribonuclease A activity"/>
    <property type="evidence" value="ECO:0007669"/>
    <property type="project" value="UniProtKB-EC"/>
</dbReference>
<dbReference type="GO" id="GO:0050830">
    <property type="term" value="P:defense response to Gram-positive bacterium"/>
    <property type="evidence" value="ECO:0007669"/>
    <property type="project" value="TreeGrafter"/>
</dbReference>
<dbReference type="CDD" id="cd06265">
    <property type="entry name" value="RNase_A_canonical"/>
    <property type="match status" value="1"/>
</dbReference>
<dbReference type="FunFam" id="3.10.130.10:FF:000001">
    <property type="entry name" value="Ribonuclease pancreatic"/>
    <property type="match status" value="1"/>
</dbReference>
<dbReference type="Gene3D" id="3.10.130.10">
    <property type="entry name" value="Ribonuclease A-like domain"/>
    <property type="match status" value="1"/>
</dbReference>
<dbReference type="InterPro" id="IPR001427">
    <property type="entry name" value="RNaseA"/>
</dbReference>
<dbReference type="InterPro" id="IPR036816">
    <property type="entry name" value="RNaseA-like_dom_sf"/>
</dbReference>
<dbReference type="InterPro" id="IPR023411">
    <property type="entry name" value="RNaseA_AS"/>
</dbReference>
<dbReference type="InterPro" id="IPR023412">
    <property type="entry name" value="RNaseA_domain"/>
</dbReference>
<dbReference type="PANTHER" id="PTHR11437">
    <property type="entry name" value="RIBONUCLEASE"/>
    <property type="match status" value="1"/>
</dbReference>
<dbReference type="PANTHER" id="PTHR11437:SF24">
    <property type="entry name" value="RIBONUCLEASE PANCREATIC"/>
    <property type="match status" value="1"/>
</dbReference>
<dbReference type="Pfam" id="PF00074">
    <property type="entry name" value="RnaseA"/>
    <property type="match status" value="1"/>
</dbReference>
<dbReference type="PRINTS" id="PR00794">
    <property type="entry name" value="RIBONUCLEASE"/>
</dbReference>
<dbReference type="SMART" id="SM00092">
    <property type="entry name" value="RNAse_Pc"/>
    <property type="match status" value="1"/>
</dbReference>
<dbReference type="SUPFAM" id="SSF54076">
    <property type="entry name" value="RNase A-like"/>
    <property type="match status" value="1"/>
</dbReference>
<dbReference type="PROSITE" id="PS00127">
    <property type="entry name" value="RNASE_PANCREATIC"/>
    <property type="match status" value="1"/>
</dbReference>
<protein>
    <recommendedName>
        <fullName>Ribonuclease pancreatic</fullName>
        <ecNumber>4.6.1.18</ecNumber>
    </recommendedName>
    <alternativeName>
        <fullName>RNase 1</fullName>
    </alternativeName>
    <alternativeName>
        <fullName>RNase A</fullName>
    </alternativeName>
</protein>
<keyword id="KW-0903">Direct protein sequencing</keyword>
<keyword id="KW-1015">Disulfide bond</keyword>
<keyword id="KW-0255">Endonuclease</keyword>
<keyword id="KW-0325">Glycoprotein</keyword>
<keyword id="KW-0378">Hydrolase</keyword>
<keyword id="KW-0456">Lyase</keyword>
<keyword id="KW-0540">Nuclease</keyword>
<keyword id="KW-0964">Secreted</keyword>
<reference key="1">
    <citation type="journal article" date="1980" name="Eur. J. Biochem.">
        <title>Pancreatic ribonucleases of mammals with ruminant-like digestion. Amino-acid sequences of hippopotamus and sloth ribonucleases.</title>
        <authorList>
            <person name="Havinga J."/>
            <person name="Beintema J.J."/>
        </authorList>
    </citation>
    <scope>PROTEIN SEQUENCE</scope>
    <scope>GLYCOSYLATION AT ASN-34</scope>
    <scope>VARIANT LYS-37</scope>
</reference>
<organism>
    <name type="scientific">Hippopotamus amphibius</name>
    <name type="common">Hippopotamus</name>
    <dbReference type="NCBI Taxonomy" id="9833"/>
    <lineage>
        <taxon>Eukaryota</taxon>
        <taxon>Metazoa</taxon>
        <taxon>Chordata</taxon>
        <taxon>Craniata</taxon>
        <taxon>Vertebrata</taxon>
        <taxon>Euteleostomi</taxon>
        <taxon>Mammalia</taxon>
        <taxon>Eutheria</taxon>
        <taxon>Laurasiatheria</taxon>
        <taxon>Artiodactyla</taxon>
        <taxon>Whippomorpha</taxon>
        <taxon>Ancodonta</taxon>
        <taxon>Hippopotamidae</taxon>
        <taxon>Hippopotamus</taxon>
    </lineage>
</organism>
<accession>P00672</accession>